<gene>
    <name type="ORF">CPIJ005299</name>
</gene>
<proteinExistence type="inferred from homology"/>
<name>EIF3H_CULQU</name>
<protein>
    <recommendedName>
        <fullName evidence="1">Eukaryotic translation initiation factor 3 subunit H</fullName>
        <shortName evidence="1">eIF3h</shortName>
    </recommendedName>
</protein>
<dbReference type="EMBL" id="DS231895">
    <property type="protein sequence ID" value="EDS44345.1"/>
    <property type="molecule type" value="Genomic_DNA"/>
</dbReference>
<dbReference type="RefSeq" id="XP_001846678.1">
    <property type="nucleotide sequence ID" value="XM_001846626.1"/>
</dbReference>
<dbReference type="SMR" id="B0WDA9"/>
<dbReference type="FunCoup" id="B0WDA9">
    <property type="interactions" value="2248"/>
</dbReference>
<dbReference type="STRING" id="7176.B0WDA9"/>
<dbReference type="MEROPS" id="M67.971"/>
<dbReference type="EnsemblMetazoa" id="CPIJ005299-RA">
    <property type="protein sequence ID" value="CPIJ005299-PA"/>
    <property type="gene ID" value="CPIJ005299"/>
</dbReference>
<dbReference type="KEGG" id="cqu:CpipJ_CPIJ005299"/>
<dbReference type="CTD" id="8667"/>
<dbReference type="VEuPathDB" id="VectorBase:CPIJ005299"/>
<dbReference type="VEuPathDB" id="VectorBase:CQUJHB008492"/>
<dbReference type="eggNOG" id="KOG1560">
    <property type="taxonomic scope" value="Eukaryota"/>
</dbReference>
<dbReference type="HOGENOM" id="CLU_044094_0_0_1"/>
<dbReference type="InParanoid" id="B0WDA9"/>
<dbReference type="OMA" id="WYQSTYF"/>
<dbReference type="OrthoDB" id="10265695at2759"/>
<dbReference type="PhylomeDB" id="B0WDA9"/>
<dbReference type="Proteomes" id="UP000002320">
    <property type="component" value="Unassembled WGS sequence"/>
</dbReference>
<dbReference type="GO" id="GO:0016282">
    <property type="term" value="C:eukaryotic 43S preinitiation complex"/>
    <property type="evidence" value="ECO:0007669"/>
    <property type="project" value="UniProtKB-UniRule"/>
</dbReference>
<dbReference type="GO" id="GO:0033290">
    <property type="term" value="C:eukaryotic 48S preinitiation complex"/>
    <property type="evidence" value="ECO:0007669"/>
    <property type="project" value="UniProtKB-UniRule"/>
</dbReference>
<dbReference type="GO" id="GO:0005852">
    <property type="term" value="C:eukaryotic translation initiation factor 3 complex"/>
    <property type="evidence" value="ECO:0007669"/>
    <property type="project" value="UniProtKB-UniRule"/>
</dbReference>
<dbReference type="GO" id="GO:0008237">
    <property type="term" value="F:metallopeptidase activity"/>
    <property type="evidence" value="ECO:0007669"/>
    <property type="project" value="InterPro"/>
</dbReference>
<dbReference type="GO" id="GO:0003743">
    <property type="term" value="F:translation initiation factor activity"/>
    <property type="evidence" value="ECO:0007669"/>
    <property type="project" value="UniProtKB-UniRule"/>
</dbReference>
<dbReference type="GO" id="GO:0001732">
    <property type="term" value="P:formation of cytoplasmic translation initiation complex"/>
    <property type="evidence" value="ECO:0007669"/>
    <property type="project" value="UniProtKB-UniRule"/>
</dbReference>
<dbReference type="CDD" id="cd08065">
    <property type="entry name" value="MPN_eIF3h"/>
    <property type="match status" value="1"/>
</dbReference>
<dbReference type="FunFam" id="3.40.140.10:FF:000045">
    <property type="entry name" value="Eukaryotic translation initiation factor 3 subunit H"/>
    <property type="match status" value="1"/>
</dbReference>
<dbReference type="Gene3D" id="3.40.140.10">
    <property type="entry name" value="Cytidine Deaminase, domain 2"/>
    <property type="match status" value="1"/>
</dbReference>
<dbReference type="HAMAP" id="MF_03007">
    <property type="entry name" value="eIF3h"/>
    <property type="match status" value="1"/>
</dbReference>
<dbReference type="InterPro" id="IPR027524">
    <property type="entry name" value="eIF3h"/>
</dbReference>
<dbReference type="InterPro" id="IPR045810">
    <property type="entry name" value="eIF3h_C"/>
</dbReference>
<dbReference type="InterPro" id="IPR000555">
    <property type="entry name" value="JAMM/MPN+_dom"/>
</dbReference>
<dbReference type="InterPro" id="IPR050242">
    <property type="entry name" value="JAMM_MPN+_peptidase_M67A"/>
</dbReference>
<dbReference type="InterPro" id="IPR037518">
    <property type="entry name" value="MPN"/>
</dbReference>
<dbReference type="PANTHER" id="PTHR10410">
    <property type="entry name" value="EUKARYOTIC TRANSLATION INITIATION FACTOR 3 -RELATED"/>
    <property type="match status" value="1"/>
</dbReference>
<dbReference type="Pfam" id="PF19445">
    <property type="entry name" value="eIF3h_C"/>
    <property type="match status" value="1"/>
</dbReference>
<dbReference type="Pfam" id="PF01398">
    <property type="entry name" value="JAB"/>
    <property type="match status" value="1"/>
</dbReference>
<dbReference type="SMART" id="SM00232">
    <property type="entry name" value="JAB_MPN"/>
    <property type="match status" value="1"/>
</dbReference>
<dbReference type="PROSITE" id="PS50249">
    <property type="entry name" value="MPN"/>
    <property type="match status" value="1"/>
</dbReference>
<keyword id="KW-0963">Cytoplasm</keyword>
<keyword id="KW-0396">Initiation factor</keyword>
<keyword id="KW-0648">Protein biosynthesis</keyword>
<keyword id="KW-1185">Reference proteome</keyword>
<organism>
    <name type="scientific">Culex quinquefasciatus</name>
    <name type="common">Southern house mosquito</name>
    <name type="synonym">Culex pungens</name>
    <dbReference type="NCBI Taxonomy" id="7176"/>
    <lineage>
        <taxon>Eukaryota</taxon>
        <taxon>Metazoa</taxon>
        <taxon>Ecdysozoa</taxon>
        <taxon>Arthropoda</taxon>
        <taxon>Hexapoda</taxon>
        <taxon>Insecta</taxon>
        <taxon>Pterygota</taxon>
        <taxon>Neoptera</taxon>
        <taxon>Endopterygota</taxon>
        <taxon>Diptera</taxon>
        <taxon>Nematocera</taxon>
        <taxon>Culicoidea</taxon>
        <taxon>Culicidae</taxon>
        <taxon>Culicinae</taxon>
        <taxon>Culicini</taxon>
        <taxon>Culex</taxon>
        <taxon>Culex</taxon>
    </lineage>
</organism>
<accession>B0WDA9</accession>
<feature type="chain" id="PRO_0000365184" description="Eukaryotic translation initiation factor 3 subunit H">
    <location>
        <begin position="1"/>
        <end position="336"/>
    </location>
</feature>
<feature type="domain" description="MPN" evidence="2">
    <location>
        <begin position="21"/>
        <end position="154"/>
    </location>
</feature>
<evidence type="ECO:0000255" key="1">
    <source>
        <dbReference type="HAMAP-Rule" id="MF_03007"/>
    </source>
</evidence>
<evidence type="ECO:0000255" key="2">
    <source>
        <dbReference type="PROSITE-ProRule" id="PRU01182"/>
    </source>
</evidence>
<reference key="1">
    <citation type="submission" date="2007-03" db="EMBL/GenBank/DDBJ databases">
        <title>Annotation of Culex pipiens quinquefasciatus.</title>
        <authorList>
            <consortium name="The Broad Institute Genome Sequencing Platform"/>
            <person name="Atkinson P.W."/>
            <person name="Hemingway J."/>
            <person name="Christensen B.M."/>
            <person name="Higgs S."/>
            <person name="Kodira C.D."/>
            <person name="Hannick L.I."/>
            <person name="Megy K."/>
            <person name="O'Leary S.B."/>
            <person name="Pearson M."/>
            <person name="Haas B.J."/>
            <person name="Mauceli E."/>
            <person name="Wortman J.R."/>
            <person name="Lee N.H."/>
            <person name="Guigo R."/>
            <person name="Stanke M."/>
            <person name="Alvarado L."/>
            <person name="Amedeo P."/>
            <person name="Antoine C.H."/>
            <person name="Arensburger P."/>
            <person name="Bidwell S.L."/>
            <person name="Crawford M."/>
            <person name="Camaro F."/>
            <person name="Devon K."/>
            <person name="Engels R."/>
            <person name="Hammond M."/>
            <person name="Howarth C."/>
            <person name="Koehrsen M."/>
            <person name="Lawson D."/>
            <person name="Montgomery P."/>
            <person name="Nene V."/>
            <person name="Nusbaum C."/>
            <person name="Puiu D."/>
            <person name="Romero-Severson J."/>
            <person name="Severson D.W."/>
            <person name="Shumway M."/>
            <person name="Sisk P."/>
            <person name="Stolte C."/>
            <person name="Zeng Q."/>
            <person name="Eisenstadt E."/>
            <person name="Fraser-Liggett C.M."/>
            <person name="Strausberg R."/>
            <person name="Galagan J."/>
            <person name="Birren B."/>
            <person name="Collins F.H."/>
        </authorList>
    </citation>
    <scope>NUCLEOTIDE SEQUENCE [LARGE SCALE GENOMIC DNA]</scope>
    <source>
        <strain>JHB</strain>
    </source>
</reference>
<sequence length="336" mass="38346">MASRSQNRRPAQEVDNTISYVQCDGLAAMKMVKHCHEESLSNMEVAQGALLGLVVDDRLEITNCFPFPKSSDETIDEEEYQLNMMRRLRLVNVDHFHVGWYQSADVGNFLSLPLLESQYHYQTSIEESVVVIYDTQKSKRGFLTLKAYRLTPQAIAMYKEGEFTPEALRNLKVGYENLFLEVPIVIKNSALCNIMMSELAEMVPEEEGTHFLDLGTASVLENHLRSMMDRVDELNQEANKFNKYQQTVIRQEQDKHRMLAKHAQENAARIAKGETAIPDDEITKLFRPPTVPPRLNPLIVSGQINTYAKHISQFCSQSLAKLYMTQALQGAKENKQ</sequence>
<comment type="function">
    <text evidence="1">Component of the eukaryotic translation initiation factor 3 (eIF-3) complex, which is involved in protein synthesis of a specialized repertoire of mRNAs and, together with other initiation factors, stimulates binding of mRNA and methionyl-tRNAi to the 40S ribosome. The eIF-3 complex specifically targets and initiates translation of a subset of mRNAs involved in cell proliferation.</text>
</comment>
<comment type="subunit">
    <text evidence="1">Component of the eukaryotic translation initiation factor 3 (eIF-3) complex.</text>
</comment>
<comment type="subcellular location">
    <subcellularLocation>
        <location evidence="1">Cytoplasm</location>
    </subcellularLocation>
</comment>
<comment type="similarity">
    <text evidence="1">Belongs to the eIF-3 subunit H family.</text>
</comment>